<dbReference type="EC" id="2.7.7.4" evidence="1"/>
<dbReference type="EMBL" id="AE014291">
    <property type="protein sequence ID" value="AAN29146.1"/>
    <property type="molecule type" value="Genomic_DNA"/>
</dbReference>
<dbReference type="EMBL" id="CP002997">
    <property type="protein sequence ID" value="AEM17558.1"/>
    <property type="molecule type" value="Genomic_DNA"/>
</dbReference>
<dbReference type="SMR" id="Q8G2W6"/>
<dbReference type="KEGG" id="bms:BR0193"/>
<dbReference type="KEGG" id="bsi:BS1330_I0193"/>
<dbReference type="HOGENOM" id="CLU_043026_0_0_5"/>
<dbReference type="UniPathway" id="UPA00140">
    <property type="reaction ID" value="UER00204"/>
</dbReference>
<dbReference type="Proteomes" id="UP000007104">
    <property type="component" value="Chromosome I"/>
</dbReference>
<dbReference type="GO" id="GO:0005524">
    <property type="term" value="F:ATP binding"/>
    <property type="evidence" value="ECO:0007669"/>
    <property type="project" value="UniProtKB-KW"/>
</dbReference>
<dbReference type="GO" id="GO:0004781">
    <property type="term" value="F:sulfate adenylyltransferase (ATP) activity"/>
    <property type="evidence" value="ECO:0007669"/>
    <property type="project" value="UniProtKB-UniRule"/>
</dbReference>
<dbReference type="GO" id="GO:0070814">
    <property type="term" value="P:hydrogen sulfide biosynthetic process"/>
    <property type="evidence" value="ECO:0007669"/>
    <property type="project" value="UniProtKB-UniRule"/>
</dbReference>
<dbReference type="GO" id="GO:0000103">
    <property type="term" value="P:sulfate assimilation"/>
    <property type="evidence" value="ECO:0007669"/>
    <property type="project" value="UniProtKB-UniRule"/>
</dbReference>
<dbReference type="CDD" id="cd23946">
    <property type="entry name" value="Sulfate_adenylyltransferase_2"/>
    <property type="match status" value="1"/>
</dbReference>
<dbReference type="FunFam" id="3.40.50.620:FF:000002">
    <property type="entry name" value="Sulfate adenylyltransferase subunit 2"/>
    <property type="match status" value="1"/>
</dbReference>
<dbReference type="Gene3D" id="3.40.50.620">
    <property type="entry name" value="HUPs"/>
    <property type="match status" value="1"/>
</dbReference>
<dbReference type="HAMAP" id="MF_00064">
    <property type="entry name" value="Sulf_adenylyltr_sub2"/>
    <property type="match status" value="1"/>
</dbReference>
<dbReference type="InterPro" id="IPR002500">
    <property type="entry name" value="PAPS_reduct_dom"/>
</dbReference>
<dbReference type="InterPro" id="IPR014729">
    <property type="entry name" value="Rossmann-like_a/b/a_fold"/>
</dbReference>
<dbReference type="InterPro" id="IPR011784">
    <property type="entry name" value="SO4_adenylTrfase_ssu"/>
</dbReference>
<dbReference type="InterPro" id="IPR050128">
    <property type="entry name" value="Sulfate_adenylyltrnsfr_sub2"/>
</dbReference>
<dbReference type="NCBIfam" id="TIGR02039">
    <property type="entry name" value="CysD"/>
    <property type="match status" value="1"/>
</dbReference>
<dbReference type="NCBIfam" id="NF003587">
    <property type="entry name" value="PRK05253.1"/>
    <property type="match status" value="1"/>
</dbReference>
<dbReference type="NCBIfam" id="NF009214">
    <property type="entry name" value="PRK12563.1"/>
    <property type="match status" value="1"/>
</dbReference>
<dbReference type="PANTHER" id="PTHR43196">
    <property type="entry name" value="SULFATE ADENYLYLTRANSFERASE SUBUNIT 2"/>
    <property type="match status" value="1"/>
</dbReference>
<dbReference type="PANTHER" id="PTHR43196:SF1">
    <property type="entry name" value="SULFATE ADENYLYLTRANSFERASE SUBUNIT 2"/>
    <property type="match status" value="1"/>
</dbReference>
<dbReference type="Pfam" id="PF01507">
    <property type="entry name" value="PAPS_reduct"/>
    <property type="match status" value="1"/>
</dbReference>
<dbReference type="PIRSF" id="PIRSF002936">
    <property type="entry name" value="CysDAde_trans"/>
    <property type="match status" value="1"/>
</dbReference>
<dbReference type="SUPFAM" id="SSF52402">
    <property type="entry name" value="Adenine nucleotide alpha hydrolases-like"/>
    <property type="match status" value="1"/>
</dbReference>
<protein>
    <recommendedName>
        <fullName evidence="1">Sulfate adenylyltransferase subunit 2</fullName>
        <ecNumber evidence="1">2.7.7.4</ecNumber>
    </recommendedName>
    <alternativeName>
        <fullName evidence="1">ATP-sulfurylase small subunit</fullName>
    </alternativeName>
    <alternativeName>
        <fullName evidence="1">Sulfate adenylate transferase</fullName>
        <shortName evidence="1">SAT</shortName>
    </alternativeName>
</protein>
<name>CYSD_BRUSU</name>
<feature type="chain" id="PRO_0000340187" description="Sulfate adenylyltransferase subunit 2">
    <location>
        <begin position="1"/>
        <end position="300"/>
    </location>
</feature>
<feature type="region of interest" description="Disordered" evidence="2">
    <location>
        <begin position="281"/>
        <end position="300"/>
    </location>
</feature>
<organism>
    <name type="scientific">Brucella suis biovar 1 (strain 1330)</name>
    <dbReference type="NCBI Taxonomy" id="204722"/>
    <lineage>
        <taxon>Bacteria</taxon>
        <taxon>Pseudomonadati</taxon>
        <taxon>Pseudomonadota</taxon>
        <taxon>Alphaproteobacteria</taxon>
        <taxon>Hyphomicrobiales</taxon>
        <taxon>Brucellaceae</taxon>
        <taxon>Brucella/Ochrobactrum group</taxon>
        <taxon>Brucella</taxon>
    </lineage>
</organism>
<sequence length="300" mass="34743">MKNLTHLQRLEAEAIHVFREVAATFSNPVMLYSVGKDSSVMLHLAMKAFYPAPPPFPFLHVDTTWKFREMIEFRDAQAREKGFELLVHVNEQGVRDGIGPFTHGSNVHTHIMKTVGLRQALDKYRFDAAFGGARRDEEKSRAKERIFSFRNAQHGWDPKNQRPEMWKIYNTRVSKGESIRVFPLSNWTELDIWQYILQENIPIVPLYFAARRPVVERDGMLIMVDDDRMKLRPGEQVENRLVRFRTLGCYPLTGAIPSSAANLSDIVEEMLIARTSERQGRAIDRDEAGSMEKKKREGYF</sequence>
<keyword id="KW-0067">ATP-binding</keyword>
<keyword id="KW-0547">Nucleotide-binding</keyword>
<keyword id="KW-0548">Nucleotidyltransferase</keyword>
<keyword id="KW-0808">Transferase</keyword>
<proteinExistence type="inferred from homology"/>
<reference key="1">
    <citation type="journal article" date="2002" name="Proc. Natl. Acad. Sci. U.S.A.">
        <title>The Brucella suis genome reveals fundamental similarities between animal and plant pathogens and symbionts.</title>
        <authorList>
            <person name="Paulsen I.T."/>
            <person name="Seshadri R."/>
            <person name="Nelson K.E."/>
            <person name="Eisen J.A."/>
            <person name="Heidelberg J.F."/>
            <person name="Read T.D."/>
            <person name="Dodson R.J."/>
            <person name="Umayam L.A."/>
            <person name="Brinkac L.M."/>
            <person name="Beanan M.J."/>
            <person name="Daugherty S.C."/>
            <person name="DeBoy R.T."/>
            <person name="Durkin A.S."/>
            <person name="Kolonay J.F."/>
            <person name="Madupu R."/>
            <person name="Nelson W.C."/>
            <person name="Ayodeji B."/>
            <person name="Kraul M."/>
            <person name="Shetty J."/>
            <person name="Malek J.A."/>
            <person name="Van Aken S.E."/>
            <person name="Riedmuller S."/>
            <person name="Tettelin H."/>
            <person name="Gill S.R."/>
            <person name="White O."/>
            <person name="Salzberg S.L."/>
            <person name="Hoover D.L."/>
            <person name="Lindler L.E."/>
            <person name="Halling S.M."/>
            <person name="Boyle S.M."/>
            <person name="Fraser C.M."/>
        </authorList>
    </citation>
    <scope>NUCLEOTIDE SEQUENCE [LARGE SCALE GENOMIC DNA]</scope>
    <source>
        <strain>1330</strain>
    </source>
</reference>
<reference key="2">
    <citation type="journal article" date="2011" name="J. Bacteriol.">
        <title>Revised genome sequence of Brucella suis 1330.</title>
        <authorList>
            <person name="Tae H."/>
            <person name="Shallom S."/>
            <person name="Settlage R."/>
            <person name="Preston D."/>
            <person name="Adams L.G."/>
            <person name="Garner H.R."/>
        </authorList>
    </citation>
    <scope>NUCLEOTIDE SEQUENCE [LARGE SCALE GENOMIC DNA]</scope>
    <source>
        <strain>1330</strain>
    </source>
</reference>
<accession>Q8G2W6</accession>
<accession>G0KBG6</accession>
<gene>
    <name evidence="1" type="primary">cysD</name>
    <name type="ordered locus">BR0193</name>
    <name type="ordered locus">BS1330_I0193</name>
</gene>
<comment type="function">
    <text evidence="1">With CysN forms the ATP sulfurylase (ATPS) that catalyzes the adenylation of sulfate producing adenosine 5'-phosphosulfate (APS) and diphosphate, the first enzymatic step in sulfur assimilation pathway. APS synthesis involves the formation of a high-energy phosphoric-sulfuric acid anhydride bond driven by GTP hydrolysis by CysN coupled to ATP hydrolysis by CysD.</text>
</comment>
<comment type="catalytic activity">
    <reaction evidence="1">
        <text>sulfate + ATP + H(+) = adenosine 5'-phosphosulfate + diphosphate</text>
        <dbReference type="Rhea" id="RHEA:18133"/>
        <dbReference type="ChEBI" id="CHEBI:15378"/>
        <dbReference type="ChEBI" id="CHEBI:16189"/>
        <dbReference type="ChEBI" id="CHEBI:30616"/>
        <dbReference type="ChEBI" id="CHEBI:33019"/>
        <dbReference type="ChEBI" id="CHEBI:58243"/>
        <dbReference type="EC" id="2.7.7.4"/>
    </reaction>
</comment>
<comment type="pathway">
    <text evidence="1">Sulfur metabolism; hydrogen sulfide biosynthesis; sulfite from sulfate: step 1/3.</text>
</comment>
<comment type="subunit">
    <text evidence="1">Heterodimer composed of CysD, the smaller subunit, and CysN.</text>
</comment>
<comment type="similarity">
    <text evidence="1">Belongs to the PAPS reductase family. CysD subfamily.</text>
</comment>
<evidence type="ECO:0000255" key="1">
    <source>
        <dbReference type="HAMAP-Rule" id="MF_00064"/>
    </source>
</evidence>
<evidence type="ECO:0000256" key="2">
    <source>
        <dbReference type="SAM" id="MobiDB-lite"/>
    </source>
</evidence>